<reference key="1">
    <citation type="journal article" date="1999" name="Genetics">
        <title>Divergence of the hyperthermophilic archaea Pyrococcus furiosus and P. horikoshii inferred from complete genomic sequences.</title>
        <authorList>
            <person name="Maeder D.L."/>
            <person name="Weiss R.B."/>
            <person name="Dunn D.M."/>
            <person name="Cherry J.L."/>
            <person name="Gonzalez J.M."/>
            <person name="DiRuggiero J."/>
            <person name="Robb F.T."/>
        </authorList>
    </citation>
    <scope>NUCLEOTIDE SEQUENCE [LARGE SCALE GENOMIC DNA]</scope>
    <source>
        <strain>ATCC 43587 / DSM 3638 / JCM 8422 / Vc1</strain>
    </source>
</reference>
<gene>
    <name evidence="1" type="primary">pan</name>
    <name type="ordered locus">PF0115</name>
</gene>
<name>PAN_PYRFU</name>
<feature type="chain" id="PRO_0000084749" description="Proteasome-activating nucleotidase">
    <location>
        <begin position="1"/>
        <end position="396"/>
    </location>
</feature>
<feature type="region of interest" description="Docks into pockets in the proteasome alpha-ring to cause gate opening" evidence="1">
    <location>
        <begin position="394"/>
        <end position="396"/>
    </location>
</feature>
<feature type="coiled-coil region" evidence="1">
    <location>
        <begin position="16"/>
        <end position="57"/>
    </location>
</feature>
<feature type="binding site" evidence="1">
    <location>
        <begin position="181"/>
        <end position="186"/>
    </location>
    <ligand>
        <name>ATP</name>
        <dbReference type="ChEBI" id="CHEBI:30616"/>
    </ligand>
</feature>
<feature type="binding site" evidence="1">
    <location>
        <position position="320"/>
    </location>
    <ligand>
        <name>ATP</name>
        <dbReference type="ChEBI" id="CHEBI:30616"/>
    </ligand>
</feature>
<feature type="strand" evidence="2">
    <location>
        <begin position="126"/>
        <end position="131"/>
    </location>
</feature>
<feature type="helix" evidence="2">
    <location>
        <begin position="136"/>
        <end position="138"/>
    </location>
</feature>
<feature type="helix" evidence="2">
    <location>
        <begin position="143"/>
        <end position="158"/>
    </location>
</feature>
<feature type="helix" evidence="2">
    <location>
        <begin position="160"/>
        <end position="165"/>
    </location>
</feature>
<feature type="strand" evidence="2">
    <location>
        <begin position="172"/>
        <end position="179"/>
    </location>
</feature>
<feature type="helix" evidence="2">
    <location>
        <begin position="184"/>
        <end position="194"/>
    </location>
</feature>
<feature type="strand" evidence="2">
    <location>
        <begin position="198"/>
        <end position="203"/>
    </location>
</feature>
<feature type="helix" evidence="2">
    <location>
        <begin position="204"/>
        <end position="207"/>
    </location>
</feature>
<feature type="helix" evidence="2">
    <location>
        <begin position="216"/>
        <end position="228"/>
    </location>
</feature>
<feature type="strand" evidence="2">
    <location>
        <begin position="231"/>
        <end position="237"/>
    </location>
</feature>
<feature type="helix" evidence="2">
    <location>
        <begin position="240"/>
        <end position="243"/>
    </location>
</feature>
<feature type="helix" evidence="2">
    <location>
        <begin position="259"/>
        <end position="270"/>
    </location>
</feature>
<feature type="strand" evidence="2">
    <location>
        <begin position="275"/>
        <end position="284"/>
    </location>
</feature>
<feature type="turn" evidence="2">
    <location>
        <begin position="291"/>
        <end position="294"/>
    </location>
</feature>
<feature type="strand" evidence="2">
    <location>
        <begin position="301"/>
        <end position="304"/>
    </location>
</feature>
<protein>
    <recommendedName>
        <fullName evidence="1">Proteasome-activating nucleotidase</fullName>
        <shortName evidence="1">PAN</shortName>
    </recommendedName>
    <alternativeName>
        <fullName evidence="1">Proteasomal ATPase</fullName>
    </alternativeName>
    <alternativeName>
        <fullName evidence="1">Proteasome regulatory ATPase</fullName>
    </alternativeName>
    <alternativeName>
        <fullName evidence="1">Proteasome regulatory particle</fullName>
    </alternativeName>
</protein>
<comment type="function">
    <text evidence="1">ATPase which is responsible for recognizing, binding, unfolding and translocation of substrate proteins into the archaeal 20S proteasome core particle. Is essential for opening the gate of the 20S proteasome via an interaction with its C-terminus, thereby allowing substrate entry and access to the site of proteolysis. Thus, the C-termini of the proteasomal ATPase function like a 'key in a lock' to induce gate opening and therefore regulate proteolysis. Unfolding activity requires energy from ATP hydrolysis, whereas ATP binding alone promotes ATPase-20S proteasome association which triggers gate opening, and supports translocation of unfolded substrates.</text>
</comment>
<comment type="subunit">
    <text evidence="1">Homohexamer. The hexameric complex has a two-ring architecture resembling a top hat that caps the 20S proteasome core at one or both ends. Upon ATP-binding, the C-terminus of PAN interacts with the alpha-rings of the proteasome core by binding to the intersubunit pockets.</text>
</comment>
<comment type="subcellular location">
    <subcellularLocation>
        <location evidence="1">Cytoplasm</location>
    </subcellularLocation>
</comment>
<comment type="domain">
    <text evidence="1">Consists of three main regions, an N-terminal coiled-coil domain that may assist in substrate recognition, an interdomain involved in PAN hexamerization, and a C-terminal ATPase domain of the AAA type.</text>
</comment>
<comment type="similarity">
    <text evidence="1">Belongs to the AAA ATPase family.</text>
</comment>
<keyword id="KW-0002">3D-structure</keyword>
<keyword id="KW-0067">ATP-binding</keyword>
<keyword id="KW-0143">Chaperone</keyword>
<keyword id="KW-0175">Coiled coil</keyword>
<keyword id="KW-0963">Cytoplasm</keyword>
<keyword id="KW-0547">Nucleotide-binding</keyword>
<keyword id="KW-0647">Proteasome</keyword>
<keyword id="KW-1185">Reference proteome</keyword>
<accession>Q8U4H3</accession>
<proteinExistence type="evidence at protein level"/>
<dbReference type="EMBL" id="AE009950">
    <property type="protein sequence ID" value="AAL80239.1"/>
    <property type="molecule type" value="Genomic_DNA"/>
</dbReference>
<dbReference type="RefSeq" id="WP_011011227.1">
    <property type="nucleotide sequence ID" value="NZ_CP023154.1"/>
</dbReference>
<dbReference type="PDB" id="3WHK">
    <property type="method" value="X-ray"/>
    <property type="resolution" value="2.60 A"/>
    <property type="chains" value="A/B/C/D/E/F/G/H=125-309"/>
</dbReference>
<dbReference type="PDB" id="3WHL">
    <property type="method" value="X-ray"/>
    <property type="resolution" value="4.00 A"/>
    <property type="chains" value="A/C/E/G=125-309"/>
</dbReference>
<dbReference type="PDBsum" id="3WHK"/>
<dbReference type="PDBsum" id="3WHL"/>
<dbReference type="SMR" id="Q8U4H3"/>
<dbReference type="STRING" id="186497.PF0115"/>
<dbReference type="PaxDb" id="186497-PF0115"/>
<dbReference type="KEGG" id="pfu:PF0115"/>
<dbReference type="PATRIC" id="fig|186497.12.peg.119"/>
<dbReference type="eggNOG" id="arCOG01306">
    <property type="taxonomic scope" value="Archaea"/>
</dbReference>
<dbReference type="HOGENOM" id="CLU_000688_2_0_2"/>
<dbReference type="OrthoDB" id="77269at2157"/>
<dbReference type="PhylomeDB" id="Q8U4H3"/>
<dbReference type="Proteomes" id="UP000001013">
    <property type="component" value="Chromosome"/>
</dbReference>
<dbReference type="GO" id="GO:0005737">
    <property type="term" value="C:cytoplasm"/>
    <property type="evidence" value="ECO:0007669"/>
    <property type="project" value="UniProtKB-SubCell"/>
</dbReference>
<dbReference type="GO" id="GO:0022623">
    <property type="term" value="C:proteasome-activating nucleotidase complex"/>
    <property type="evidence" value="ECO:0007669"/>
    <property type="project" value="UniProtKB-UniRule"/>
</dbReference>
<dbReference type="GO" id="GO:0005524">
    <property type="term" value="F:ATP binding"/>
    <property type="evidence" value="ECO:0007669"/>
    <property type="project" value="UniProtKB-UniRule"/>
</dbReference>
<dbReference type="GO" id="GO:0016887">
    <property type="term" value="F:ATP hydrolysis activity"/>
    <property type="evidence" value="ECO:0007669"/>
    <property type="project" value="UniProtKB-UniRule"/>
</dbReference>
<dbReference type="GO" id="GO:0010498">
    <property type="term" value="P:proteasomal protein catabolic process"/>
    <property type="evidence" value="ECO:0007669"/>
    <property type="project" value="UniProtKB-UniRule"/>
</dbReference>
<dbReference type="GO" id="GO:0043335">
    <property type="term" value="P:protein unfolding"/>
    <property type="evidence" value="ECO:0007669"/>
    <property type="project" value="UniProtKB-UniRule"/>
</dbReference>
<dbReference type="CDD" id="cd19502">
    <property type="entry name" value="RecA-like_PAN_like"/>
    <property type="match status" value="1"/>
</dbReference>
<dbReference type="FunFam" id="3.40.50.300:FF:000033">
    <property type="entry name" value="26S protease regulatory subunit 6B"/>
    <property type="match status" value="1"/>
</dbReference>
<dbReference type="FunFam" id="1.10.8.60:FF:000006">
    <property type="entry name" value="26S protease regulatory subunit 8"/>
    <property type="match status" value="1"/>
</dbReference>
<dbReference type="Gene3D" id="1.10.8.60">
    <property type="match status" value="1"/>
</dbReference>
<dbReference type="Gene3D" id="2.40.50.140">
    <property type="entry name" value="Nucleic acid-binding proteins"/>
    <property type="match status" value="1"/>
</dbReference>
<dbReference type="Gene3D" id="3.40.50.300">
    <property type="entry name" value="P-loop containing nucleotide triphosphate hydrolases"/>
    <property type="match status" value="1"/>
</dbReference>
<dbReference type="HAMAP" id="MF_00553">
    <property type="entry name" value="PAN"/>
    <property type="match status" value="1"/>
</dbReference>
<dbReference type="InterPro" id="IPR050221">
    <property type="entry name" value="26S_Proteasome_ATPase"/>
</dbReference>
<dbReference type="InterPro" id="IPR003593">
    <property type="entry name" value="AAA+_ATPase"/>
</dbReference>
<dbReference type="InterPro" id="IPR041569">
    <property type="entry name" value="AAA_lid_3"/>
</dbReference>
<dbReference type="InterPro" id="IPR003959">
    <property type="entry name" value="ATPase_AAA_core"/>
</dbReference>
<dbReference type="InterPro" id="IPR003960">
    <property type="entry name" value="ATPase_AAA_CS"/>
</dbReference>
<dbReference type="InterPro" id="IPR012340">
    <property type="entry name" value="NA-bd_OB-fold"/>
</dbReference>
<dbReference type="InterPro" id="IPR023501">
    <property type="entry name" value="Nucleotidase_PAN"/>
</dbReference>
<dbReference type="InterPro" id="IPR027417">
    <property type="entry name" value="P-loop_NTPase"/>
</dbReference>
<dbReference type="InterPro" id="IPR032501">
    <property type="entry name" value="Prot_ATP_ID_OB_2nd"/>
</dbReference>
<dbReference type="NCBIfam" id="NF003069">
    <property type="entry name" value="PRK03992.1"/>
    <property type="match status" value="1"/>
</dbReference>
<dbReference type="NCBIfam" id="TIGR01242">
    <property type="entry name" value="proteasome-activating nucleotidase"/>
    <property type="match status" value="1"/>
</dbReference>
<dbReference type="PANTHER" id="PTHR23073">
    <property type="entry name" value="26S PROTEASOME REGULATORY SUBUNIT"/>
    <property type="match status" value="1"/>
</dbReference>
<dbReference type="Pfam" id="PF00004">
    <property type="entry name" value="AAA"/>
    <property type="match status" value="1"/>
</dbReference>
<dbReference type="Pfam" id="PF17862">
    <property type="entry name" value="AAA_lid_3"/>
    <property type="match status" value="1"/>
</dbReference>
<dbReference type="Pfam" id="PF16450">
    <property type="entry name" value="Prot_ATP_ID_OB_C"/>
    <property type="match status" value="1"/>
</dbReference>
<dbReference type="SMART" id="SM00382">
    <property type="entry name" value="AAA"/>
    <property type="match status" value="1"/>
</dbReference>
<dbReference type="SUPFAM" id="SSF52540">
    <property type="entry name" value="P-loop containing nucleoside triphosphate hydrolases"/>
    <property type="match status" value="1"/>
</dbReference>
<dbReference type="PROSITE" id="PS00674">
    <property type="entry name" value="AAA"/>
    <property type="match status" value="1"/>
</dbReference>
<sequence length="396" mass="44805">MSEDEAQFHGNYDDYVTYLKRRIRQLELQVRMLEADKERLERELSRLRSEMSRLRQPPAFAGSVIEVLDDDRAIVQNYNGPRFVVRIAPWIDKSKLRPGTRVALDQRTMAIIEILPASKDPAVLGFEVVERPNVTYNDIGGLKKQLQELREAIELPLKHPELFEEVGIDPPKGVLLYGPPGCGKTLMAKAIAHEVNATFIRVVGSELVRKYIGEGARLVHELFELAKEKAPTIIFIDEIDAIGAKRLDETTGGEREVNRTLMQLLAEMDGFDPRGNVKVIAATNRPDILDPALLRPGRFDRLIEVPLPDFEGRLEILKVHTRRMKLRGVDLRLIAELTEGASGADLKAIATEAGMFAIRERRTYVTQEDFLKAIDKVLGNEKKIIQQIMSHEVIYG</sequence>
<evidence type="ECO:0000255" key="1">
    <source>
        <dbReference type="HAMAP-Rule" id="MF_00553"/>
    </source>
</evidence>
<evidence type="ECO:0007829" key="2">
    <source>
        <dbReference type="PDB" id="3WHK"/>
    </source>
</evidence>
<organism>
    <name type="scientific">Pyrococcus furiosus (strain ATCC 43587 / DSM 3638 / JCM 8422 / Vc1)</name>
    <dbReference type="NCBI Taxonomy" id="186497"/>
    <lineage>
        <taxon>Archaea</taxon>
        <taxon>Methanobacteriati</taxon>
        <taxon>Methanobacteriota</taxon>
        <taxon>Thermococci</taxon>
        <taxon>Thermococcales</taxon>
        <taxon>Thermococcaceae</taxon>
        <taxon>Pyrococcus</taxon>
    </lineage>
</organism>